<evidence type="ECO:0000250" key="1"/>
<evidence type="ECO:0000250" key="2">
    <source>
        <dbReference type="UniProtKB" id="Q6NZB1"/>
    </source>
</evidence>
<evidence type="ECO:0000255" key="3">
    <source>
        <dbReference type="PROSITE-ProRule" id="PRU01015"/>
    </source>
</evidence>
<evidence type="ECO:0000256" key="4">
    <source>
        <dbReference type="SAM" id="MobiDB-lite"/>
    </source>
</evidence>
<evidence type="ECO:0000269" key="5">
    <source>
    </source>
</evidence>
<evidence type="ECO:0000269" key="6">
    <source>
    </source>
</evidence>
<evidence type="ECO:0000269" key="7">
    <source>
    </source>
</evidence>
<evidence type="ECO:0000269" key="8">
    <source>
    </source>
</evidence>
<evidence type="ECO:0000269" key="9">
    <source>
    </source>
</evidence>
<evidence type="ECO:0000269" key="10">
    <source>
    </source>
</evidence>
<evidence type="ECO:0000269" key="11">
    <source>
    </source>
</evidence>
<evidence type="ECO:0000269" key="12">
    <source>
    </source>
</evidence>
<evidence type="ECO:0000269" key="13">
    <source>
    </source>
</evidence>
<evidence type="ECO:0000269" key="14">
    <source>
    </source>
</evidence>
<evidence type="ECO:0000269" key="15">
    <source>
    </source>
</evidence>
<evidence type="ECO:0000269" key="16">
    <source>
    </source>
</evidence>
<evidence type="ECO:0000269" key="17">
    <source>
    </source>
</evidence>
<evidence type="ECO:0000269" key="18">
    <source>
    </source>
</evidence>
<evidence type="ECO:0000269" key="19">
    <source>
    </source>
</evidence>
<evidence type="ECO:0000269" key="20">
    <source>
    </source>
</evidence>
<evidence type="ECO:0000269" key="21">
    <source>
    </source>
</evidence>
<evidence type="ECO:0000269" key="22">
    <source>
    </source>
</evidence>
<evidence type="ECO:0000269" key="23">
    <source>
    </source>
</evidence>
<evidence type="ECO:0000269" key="24">
    <source>
    </source>
</evidence>
<evidence type="ECO:0000269" key="25">
    <source ref="28"/>
</evidence>
<evidence type="ECO:0000303" key="26">
    <source>
    </source>
</evidence>
<evidence type="ECO:0000305" key="27"/>
<evidence type="ECO:0007744" key="28">
    <source>
    </source>
</evidence>
<evidence type="ECO:0007744" key="29">
    <source>
    </source>
</evidence>
<evidence type="ECO:0007829" key="30">
    <source>
        <dbReference type="PDB" id="4QQK"/>
    </source>
</evidence>
<evidence type="ECO:0007829" key="31">
    <source>
        <dbReference type="PDB" id="4Y30"/>
    </source>
</evidence>
<evidence type="ECO:0007829" key="32">
    <source>
        <dbReference type="PDB" id="6P7I"/>
    </source>
</evidence>
<evidence type="ECO:0007829" key="33">
    <source>
        <dbReference type="PDB" id="6W6D"/>
    </source>
</evidence>
<dbReference type="EC" id="2.1.1.319" evidence="15 16 17 19 24"/>
<dbReference type="EMBL" id="AY043278">
    <property type="protein sequence ID" value="AAK85733.1"/>
    <property type="molecule type" value="mRNA"/>
</dbReference>
<dbReference type="EMBL" id="AK001421">
    <property type="protein sequence ID" value="BAA91681.1"/>
    <property type="status" value="ALT_INIT"/>
    <property type="molecule type" value="mRNA"/>
</dbReference>
<dbReference type="EMBL" id="AK295541">
    <property type="protein sequence ID" value="BAG58450.1"/>
    <property type="molecule type" value="mRNA"/>
</dbReference>
<dbReference type="EMBL" id="AL355539">
    <property type="status" value="NOT_ANNOTATED_CDS"/>
    <property type="molecule type" value="Genomic_DNA"/>
</dbReference>
<dbReference type="EMBL" id="CH471156">
    <property type="protein sequence ID" value="EAW51248.1"/>
    <property type="molecule type" value="Genomic_DNA"/>
</dbReference>
<dbReference type="EMBL" id="BC002729">
    <property type="protein sequence ID" value="AAH02729.3"/>
    <property type="status" value="ALT_INIT"/>
    <property type="molecule type" value="mRNA"/>
</dbReference>
<dbReference type="EMBL" id="BC063446">
    <property type="protein sequence ID" value="AAH63446.2"/>
    <property type="status" value="ALT_INIT"/>
    <property type="molecule type" value="mRNA"/>
</dbReference>
<dbReference type="EMBL" id="BC073866">
    <property type="protein sequence ID" value="AAH73866.1"/>
    <property type="molecule type" value="mRNA"/>
</dbReference>
<dbReference type="EMBL" id="BX475300">
    <property type="status" value="NOT_ANNOTATED_CDS"/>
    <property type="molecule type" value="mRNA"/>
</dbReference>
<dbReference type="CCDS" id="CCDS41360.2">
    <molecule id="Q96LA8-1"/>
</dbReference>
<dbReference type="RefSeq" id="NP_060607.2">
    <molecule id="Q96LA8-1"/>
    <property type="nucleotide sequence ID" value="NM_018137.3"/>
</dbReference>
<dbReference type="PDB" id="4HC4">
    <property type="method" value="X-ray"/>
    <property type="resolution" value="1.97 A"/>
    <property type="chains" value="A=1-375"/>
</dbReference>
<dbReference type="PDB" id="4QPP">
    <property type="method" value="X-ray"/>
    <property type="resolution" value="2.52 A"/>
    <property type="chains" value="A/B/C=1-375"/>
</dbReference>
<dbReference type="PDB" id="4QQK">
    <property type="method" value="X-ray"/>
    <property type="resolution" value="1.88 A"/>
    <property type="chains" value="A=1-375"/>
</dbReference>
<dbReference type="PDB" id="4Y2H">
    <property type="method" value="X-ray"/>
    <property type="resolution" value="2.37 A"/>
    <property type="chains" value="A/B=27-375"/>
</dbReference>
<dbReference type="PDB" id="4Y30">
    <property type="method" value="X-ray"/>
    <property type="resolution" value="2.10 A"/>
    <property type="chains" value="A/B=25-375"/>
</dbReference>
<dbReference type="PDB" id="5E8R">
    <property type="method" value="X-ray"/>
    <property type="resolution" value="2.55 A"/>
    <property type="chains" value="A/B=1-375"/>
</dbReference>
<dbReference type="PDB" id="5EGS">
    <property type="method" value="X-ray"/>
    <property type="resolution" value="2.15 A"/>
    <property type="chains" value="A/B/C/D=1-375"/>
</dbReference>
<dbReference type="PDB" id="5HZM">
    <property type="method" value="X-ray"/>
    <property type="resolution" value="2.02 A"/>
    <property type="chains" value="A=1-375"/>
</dbReference>
<dbReference type="PDB" id="5WCF">
    <property type="method" value="X-ray"/>
    <property type="resolution" value="1.98 A"/>
    <property type="chains" value="A=1-375"/>
</dbReference>
<dbReference type="PDB" id="6P7I">
    <property type="method" value="X-ray"/>
    <property type="resolution" value="2.00 A"/>
    <property type="chains" value="A/B/C/D=1-375"/>
</dbReference>
<dbReference type="PDB" id="6W6D">
    <property type="method" value="X-ray"/>
    <property type="resolution" value="1.91 A"/>
    <property type="chains" value="A=1-375"/>
</dbReference>
<dbReference type="PDB" id="6WAD">
    <property type="method" value="X-ray"/>
    <property type="resolution" value="2.45 A"/>
    <property type="chains" value="A=1-375"/>
</dbReference>
<dbReference type="PDB" id="7NR4">
    <property type="method" value="X-ray"/>
    <property type="resolution" value="2.03 A"/>
    <property type="chains" value="A/B/C/D=1-375"/>
</dbReference>
<dbReference type="PDBsum" id="4HC4"/>
<dbReference type="PDBsum" id="4QPP"/>
<dbReference type="PDBsum" id="4QQK"/>
<dbReference type="PDBsum" id="4Y2H"/>
<dbReference type="PDBsum" id="4Y30"/>
<dbReference type="PDBsum" id="5E8R"/>
<dbReference type="PDBsum" id="5EGS"/>
<dbReference type="PDBsum" id="5HZM"/>
<dbReference type="PDBsum" id="5WCF"/>
<dbReference type="PDBsum" id="6P7I"/>
<dbReference type="PDBsum" id="6W6D"/>
<dbReference type="PDBsum" id="6WAD"/>
<dbReference type="PDBsum" id="7NR4"/>
<dbReference type="SMR" id="Q96LA8"/>
<dbReference type="BioGRID" id="120469">
    <property type="interactions" value="168"/>
</dbReference>
<dbReference type="FunCoup" id="Q96LA8">
    <property type="interactions" value="2965"/>
</dbReference>
<dbReference type="IntAct" id="Q96LA8">
    <property type="interactions" value="129"/>
</dbReference>
<dbReference type="MINT" id="Q96LA8"/>
<dbReference type="STRING" id="9606.ENSP00000359095"/>
<dbReference type="BindingDB" id="Q96LA8"/>
<dbReference type="ChEMBL" id="CHEMBL1275221"/>
<dbReference type="GuidetoPHARMACOLOGY" id="1257"/>
<dbReference type="iPTMnet" id="Q96LA8"/>
<dbReference type="PhosphoSitePlus" id="Q96LA8"/>
<dbReference type="BioMuta" id="PRMT6"/>
<dbReference type="DMDM" id="20137409"/>
<dbReference type="jPOST" id="Q96LA8"/>
<dbReference type="MassIVE" id="Q96LA8"/>
<dbReference type="PaxDb" id="9606-ENSP00000359095"/>
<dbReference type="PeptideAtlas" id="Q96LA8"/>
<dbReference type="ProteomicsDB" id="77181">
    <molecule id="Q96LA8-1"/>
</dbReference>
<dbReference type="ProteomicsDB" id="77182">
    <molecule id="Q96LA8-2"/>
</dbReference>
<dbReference type="Pumba" id="Q96LA8"/>
<dbReference type="Antibodypedia" id="21010">
    <property type="antibodies" value="434 antibodies from 41 providers"/>
</dbReference>
<dbReference type="DNASU" id="55170"/>
<dbReference type="Ensembl" id="ENST00000370078.2">
    <molecule id="Q96LA8-1"/>
    <property type="protein sequence ID" value="ENSP00000359095.1"/>
    <property type="gene ID" value="ENSG00000198890.9"/>
</dbReference>
<dbReference type="GeneID" id="55170"/>
<dbReference type="KEGG" id="hsa:55170"/>
<dbReference type="MANE-Select" id="ENST00000370078.2">
    <property type="protein sequence ID" value="ENSP00000359095.1"/>
    <property type="RefSeq nucleotide sequence ID" value="NM_018137.3"/>
    <property type="RefSeq protein sequence ID" value="NP_060607.2"/>
</dbReference>
<dbReference type="UCSC" id="uc010ous.4">
    <molecule id="Q96LA8-1"/>
    <property type="organism name" value="human"/>
</dbReference>
<dbReference type="AGR" id="HGNC:18241"/>
<dbReference type="CTD" id="55170"/>
<dbReference type="DisGeNET" id="55170"/>
<dbReference type="GeneCards" id="PRMT6"/>
<dbReference type="HGNC" id="HGNC:18241">
    <property type="gene designation" value="PRMT6"/>
</dbReference>
<dbReference type="HPA" id="ENSG00000198890">
    <property type="expression patterns" value="Low tissue specificity"/>
</dbReference>
<dbReference type="MIM" id="608274">
    <property type="type" value="gene"/>
</dbReference>
<dbReference type="neXtProt" id="NX_Q96LA8"/>
<dbReference type="OpenTargets" id="ENSG00000198890"/>
<dbReference type="PharmGKB" id="PA134992775"/>
<dbReference type="VEuPathDB" id="HostDB:ENSG00000198890"/>
<dbReference type="eggNOG" id="KOG1499">
    <property type="taxonomic scope" value="Eukaryota"/>
</dbReference>
<dbReference type="GeneTree" id="ENSGT00940000160961"/>
<dbReference type="HOGENOM" id="CLU_017375_1_2_1"/>
<dbReference type="InParanoid" id="Q96LA8"/>
<dbReference type="OMA" id="CIHVDYT"/>
<dbReference type="OrthoDB" id="7848332at2759"/>
<dbReference type="PAN-GO" id="Q96LA8">
    <property type="GO annotations" value="0 GO annotations based on evolutionary models"/>
</dbReference>
<dbReference type="PhylomeDB" id="Q96LA8"/>
<dbReference type="TreeFam" id="TF328817"/>
<dbReference type="BioCyc" id="MetaCyc:HS11391-MONOMER"/>
<dbReference type="BRENDA" id="2.1.1.319">
    <property type="organism ID" value="2681"/>
</dbReference>
<dbReference type="PathwayCommons" id="Q96LA8"/>
<dbReference type="Reactome" id="R-HSA-3214858">
    <property type="pathway name" value="RMTs methylate histone arginines"/>
</dbReference>
<dbReference type="Reactome" id="R-HSA-8936459">
    <property type="pathway name" value="RUNX1 regulates genes involved in megakaryocyte differentiation and platelet function"/>
</dbReference>
<dbReference type="SABIO-RK" id="Q96LA8"/>
<dbReference type="SignaLink" id="Q96LA8"/>
<dbReference type="SIGNOR" id="Q96LA8"/>
<dbReference type="BioGRID-ORCS" id="55170">
    <property type="hits" value="17 hits in 1162 CRISPR screens"/>
</dbReference>
<dbReference type="CD-CODE" id="91857CE7">
    <property type="entry name" value="Nucleolus"/>
</dbReference>
<dbReference type="ChiTaRS" id="PRMT6">
    <property type="organism name" value="human"/>
</dbReference>
<dbReference type="EvolutionaryTrace" id="Q96LA8"/>
<dbReference type="GeneWiki" id="PRMT6"/>
<dbReference type="GenomeRNAi" id="55170"/>
<dbReference type="Pharos" id="Q96LA8">
    <property type="development level" value="Tchem"/>
</dbReference>
<dbReference type="PRO" id="PR:Q96LA8"/>
<dbReference type="Proteomes" id="UP000005640">
    <property type="component" value="Chromosome 1"/>
</dbReference>
<dbReference type="RNAct" id="Q96LA8">
    <property type="molecule type" value="protein"/>
</dbReference>
<dbReference type="Bgee" id="ENSG00000198890">
    <property type="expression patterns" value="Expressed in primordial germ cell in gonad and 173 other cell types or tissues"/>
</dbReference>
<dbReference type="ExpressionAtlas" id="Q96LA8">
    <property type="expression patterns" value="baseline and differential"/>
</dbReference>
<dbReference type="GO" id="GO:0005730">
    <property type="term" value="C:nucleolus"/>
    <property type="evidence" value="ECO:0000314"/>
    <property type="project" value="HPA"/>
</dbReference>
<dbReference type="GO" id="GO:0005654">
    <property type="term" value="C:nucleoplasm"/>
    <property type="evidence" value="ECO:0000314"/>
    <property type="project" value="HPA"/>
</dbReference>
<dbReference type="GO" id="GO:0005634">
    <property type="term" value="C:nucleus"/>
    <property type="evidence" value="ECO:0000314"/>
    <property type="project" value="UniProtKB"/>
</dbReference>
<dbReference type="GO" id="GO:0003682">
    <property type="term" value="F:chromatin binding"/>
    <property type="evidence" value="ECO:0007669"/>
    <property type="project" value="Ensembl"/>
</dbReference>
<dbReference type="GO" id="GO:0008469">
    <property type="term" value="F:histone arginine N-methyltransferase activity"/>
    <property type="evidence" value="ECO:0000314"/>
    <property type="project" value="CACAO"/>
</dbReference>
<dbReference type="GO" id="GO:0042393">
    <property type="term" value="F:histone binding"/>
    <property type="evidence" value="ECO:0000314"/>
    <property type="project" value="UniProtKB"/>
</dbReference>
<dbReference type="GO" id="GO:0070612">
    <property type="term" value="F:histone H2AR3 methyltransferase activity"/>
    <property type="evidence" value="ECO:0000314"/>
    <property type="project" value="UniProtKB"/>
</dbReference>
<dbReference type="GO" id="GO:0140938">
    <property type="term" value="F:histone H3 methyltransferase activity"/>
    <property type="evidence" value="ECO:0000269"/>
    <property type="project" value="Reactome"/>
</dbReference>
<dbReference type="GO" id="GO:0070611">
    <property type="term" value="F:histone H3R2 methyltransferase activity"/>
    <property type="evidence" value="ECO:0000314"/>
    <property type="project" value="UniProtKB"/>
</dbReference>
<dbReference type="GO" id="GO:0044020">
    <property type="term" value="F:histone H4R3 methyltransferase activity"/>
    <property type="evidence" value="ECO:0000314"/>
    <property type="project" value="UniProtKB"/>
</dbReference>
<dbReference type="GO" id="GO:0042054">
    <property type="term" value="F:histone methyltransferase activity"/>
    <property type="evidence" value="ECO:0000314"/>
    <property type="project" value="UniProtKB"/>
</dbReference>
<dbReference type="GO" id="GO:0016274">
    <property type="term" value="F:protein-arginine N-methyltransferase activity"/>
    <property type="evidence" value="ECO:0000314"/>
    <property type="project" value="UniProtKB"/>
</dbReference>
<dbReference type="GO" id="GO:0035242">
    <property type="term" value="F:protein-arginine omega-N asymmetric methyltransferase activity"/>
    <property type="evidence" value="ECO:0000314"/>
    <property type="project" value="UniProtKB"/>
</dbReference>
<dbReference type="GO" id="GO:0035241">
    <property type="term" value="F:protein-arginine omega-N monomethyltransferase activity"/>
    <property type="evidence" value="ECO:0000314"/>
    <property type="project" value="UniProtKB"/>
</dbReference>
<dbReference type="GO" id="GO:0006284">
    <property type="term" value="P:base-excision repair"/>
    <property type="evidence" value="ECO:0000304"/>
    <property type="project" value="UniProtKB"/>
</dbReference>
<dbReference type="GO" id="GO:0090398">
    <property type="term" value="P:cellular senescence"/>
    <property type="evidence" value="ECO:0007669"/>
    <property type="project" value="Ensembl"/>
</dbReference>
<dbReference type="GO" id="GO:0006338">
    <property type="term" value="P:chromatin remodeling"/>
    <property type="evidence" value="ECO:0000318"/>
    <property type="project" value="GO_Central"/>
</dbReference>
<dbReference type="GO" id="GO:0032259">
    <property type="term" value="P:methylation"/>
    <property type="evidence" value="ECO:0007669"/>
    <property type="project" value="UniProtKB-KW"/>
</dbReference>
<dbReference type="GO" id="GO:0045892">
    <property type="term" value="P:negative regulation of DNA-templated transcription"/>
    <property type="evidence" value="ECO:0000314"/>
    <property type="project" value="UniProtKB"/>
</dbReference>
<dbReference type="GO" id="GO:0000122">
    <property type="term" value="P:negative regulation of transcription by RNA polymerase II"/>
    <property type="evidence" value="ECO:0007669"/>
    <property type="project" value="Ensembl"/>
</dbReference>
<dbReference type="GO" id="GO:2000059">
    <property type="term" value="P:negative regulation of ubiquitin-dependent protein catabolic process"/>
    <property type="evidence" value="ECO:0007669"/>
    <property type="project" value="Ensembl"/>
</dbReference>
<dbReference type="GO" id="GO:0036211">
    <property type="term" value="P:protein modification process"/>
    <property type="evidence" value="ECO:0000314"/>
    <property type="project" value="UniProtKB"/>
</dbReference>
<dbReference type="GO" id="GO:0006355">
    <property type="term" value="P:regulation of DNA-templated transcription"/>
    <property type="evidence" value="ECO:0000318"/>
    <property type="project" value="GO_Central"/>
</dbReference>
<dbReference type="GO" id="GO:0045652">
    <property type="term" value="P:regulation of megakaryocyte differentiation"/>
    <property type="evidence" value="ECO:0000304"/>
    <property type="project" value="Reactome"/>
</dbReference>
<dbReference type="GO" id="GO:0010821">
    <property type="term" value="P:regulation of mitochondrion organization"/>
    <property type="evidence" value="ECO:0000314"/>
    <property type="project" value="UniProtKB"/>
</dbReference>
<dbReference type="GO" id="GO:1901796">
    <property type="term" value="P:regulation of signal transduction by p53 class mediator"/>
    <property type="evidence" value="ECO:0007669"/>
    <property type="project" value="Ensembl"/>
</dbReference>
<dbReference type="CDD" id="cd02440">
    <property type="entry name" value="AdoMet_MTases"/>
    <property type="match status" value="1"/>
</dbReference>
<dbReference type="FunFam" id="3.40.50.150:FF:000016">
    <property type="entry name" value="Protein arginine N-methyltransferase 6"/>
    <property type="match status" value="1"/>
</dbReference>
<dbReference type="FunFam" id="2.70.160.11:FF:000009">
    <property type="entry name" value="protein arginine N-methyltransferase 6"/>
    <property type="match status" value="1"/>
</dbReference>
<dbReference type="Gene3D" id="2.70.160.11">
    <property type="entry name" value="Hnrnp arginine n-methyltransferase1"/>
    <property type="match status" value="1"/>
</dbReference>
<dbReference type="Gene3D" id="3.40.50.150">
    <property type="entry name" value="Vaccinia Virus protein VP39"/>
    <property type="match status" value="1"/>
</dbReference>
<dbReference type="InterPro" id="IPR025799">
    <property type="entry name" value="Arg_MeTrfase"/>
</dbReference>
<dbReference type="InterPro" id="IPR041698">
    <property type="entry name" value="Methyltransf_25"/>
</dbReference>
<dbReference type="InterPro" id="IPR055135">
    <property type="entry name" value="PRMT_dom"/>
</dbReference>
<dbReference type="InterPro" id="IPR029063">
    <property type="entry name" value="SAM-dependent_MTases_sf"/>
</dbReference>
<dbReference type="PANTHER" id="PTHR11006">
    <property type="entry name" value="PROTEIN ARGININE N-METHYLTRANSFERASE"/>
    <property type="match status" value="1"/>
</dbReference>
<dbReference type="PANTHER" id="PTHR11006:SF73">
    <property type="entry name" value="PROTEIN ARGININE N-METHYLTRANSFERASE 6"/>
    <property type="match status" value="1"/>
</dbReference>
<dbReference type="Pfam" id="PF13649">
    <property type="entry name" value="Methyltransf_25"/>
    <property type="match status" value="1"/>
</dbReference>
<dbReference type="Pfam" id="PF22528">
    <property type="entry name" value="PRMT_C"/>
    <property type="match status" value="1"/>
</dbReference>
<dbReference type="SUPFAM" id="SSF53335">
    <property type="entry name" value="S-adenosyl-L-methionine-dependent methyltransferases"/>
    <property type="match status" value="1"/>
</dbReference>
<dbReference type="PROSITE" id="PS51678">
    <property type="entry name" value="SAM_MT_PRMT"/>
    <property type="match status" value="1"/>
</dbReference>
<comment type="function">
    <text evidence="2 5 9 10 11 13 15 16 17 19 20 21 24">Arginine methyltransferase that can catalyze the formation of both omega-N monomethylarginine (MMA) and asymmetrical dimethylarginine (aDMA), with a strong preference for the formation of aDMA (PubMed:17898714, PubMed:18077460, PubMed:18079182, PubMed:19405910, PubMed:30420520). Preferentially methylates arginyl residues present in a glycine and arginine-rich domain and displays preference for monomethylated substrates (PubMed:17898714, PubMed:18077460, PubMed:18079182, PubMed:19405910). Specifically mediates the asymmetric dimethylation of histone H3 'Arg-2' to form H3R2me2a (PubMed:17898714, PubMed:18077460, PubMed:18079182). H3R2me2a represents a specific tag for epigenetic transcriptional repression and is mutually exclusive with methylation on histone H3 'Lys-4' (H3K4me2 and H3K4me3) (PubMed:17898714, PubMed:18077460). Acts as a transcriptional repressor of various genes such as HOXA2, THBS1 and TP53 (PubMed:19509293). Repression of TP53 blocks cellular senescence (By similarity). Also methylates histone H2A and H4 'Arg-3' (H2AR3me and H4R3me, respectively). Acts as a regulator of DNA base excision during DNA repair by mediating the methylation of DNA polymerase beta (POLB), leading to the stimulation of its polymerase activity by enhancing DNA binding and processivity (PubMed:16600869). Methylates HMGA1 (PubMed:16157300, PubMed:16159886). Regulates alternative splicing events. Acts as a transcriptional coactivator of a number of steroid hormone receptors including ESR1, ESR2, PGR and NR3C1. Promotes fasting-induced transcriptional activation of the gluconeogenic program through methylation of the CRTC2 transcription coactivator (By similarity). May play a role in innate immunity against HIV-1 in case of infection by methylating and impairing the function of various HIV-1 proteins such as Tat, Rev and Nucleocapsid protein p7 (NC) (PubMed:17267505). Methylates GPS2, protecting GPS2 from ubiquitination and degradation (By similarity). Methylates SIRT7, inhibiting SIRT7 histone deacetylase activity and promoting mitochondria biogenesis (PubMed:30420520).</text>
</comment>
<comment type="catalytic activity">
    <reaction evidence="15 16 17 19 24">
        <text>L-arginyl-[protein] + 2 S-adenosyl-L-methionine = N(omega),N(omega)-dimethyl-L-arginyl-[protein] + 2 S-adenosyl-L-homocysteine + 2 H(+)</text>
        <dbReference type="Rhea" id="RHEA:48096"/>
        <dbReference type="Rhea" id="RHEA-COMP:10532"/>
        <dbReference type="Rhea" id="RHEA-COMP:11991"/>
        <dbReference type="ChEBI" id="CHEBI:15378"/>
        <dbReference type="ChEBI" id="CHEBI:29965"/>
        <dbReference type="ChEBI" id="CHEBI:57856"/>
        <dbReference type="ChEBI" id="CHEBI:59789"/>
        <dbReference type="ChEBI" id="CHEBI:61897"/>
        <dbReference type="EC" id="2.1.1.319"/>
    </reaction>
    <physiologicalReaction direction="left-to-right" evidence="15 16 17 19 24">
        <dbReference type="Rhea" id="RHEA:48097"/>
    </physiologicalReaction>
</comment>
<comment type="biophysicochemical properties">
    <kinetics>
        <KM evidence="18">18.6 uM for AdoMet</KM>
        <KM evidence="18">501 uM for WGGYSRGGYGGW peptide</KM>
        <KM evidence="18">183.7 uM for WGGYSR(MMA)GGYGGW monomethylated peptide</KM>
        <Vmax evidence="18">3.3 nmol/min/mg enzyme with AdoMet as substrate</Vmax>
        <Vmax evidence="18">1.8 nmol/min/mg enzyme with WGGYSRGGYGGW peptide as substrate</Vmax>
        <Vmax evidence="18">3.2 nmol/min/mg enzyme with WGGYSR(MMA)GGYGGW monomethylated peptide as substrate</Vmax>
    </kinetics>
</comment>
<comment type="subunit">
    <text evidence="6 9 10 11 21 25">Interacts with EPB41L3 and NCOA1.</text>
</comment>
<comment type="subunit">
    <text evidence="8 12 13 14">(Microbial infection) Interacts with (and methylates) HIV-1 Tat, Rev and Nucleocapsid protein p7 (NC).</text>
</comment>
<comment type="subunit">
    <text evidence="23">(Microbial infection) Interacts with human cytomegalovirus protein UL69.</text>
</comment>
<comment type="interaction">
    <interactant intactId="EBI-912440">
        <id>Q96LA8</id>
    </interactant>
    <interactant intactId="EBI-8466055">
        <id>Q6P047</id>
        <label>C8orf74</label>
    </interactant>
    <organismsDiffer>false</organismsDiffer>
    <experiments>2</experiments>
</comment>
<comment type="interaction">
    <interactant intactId="EBI-912440">
        <id>Q96LA8</id>
    </interactant>
    <interactant intactId="EBI-1773949">
        <id>Q9BXL8</id>
        <label>CDCA4</label>
    </interactant>
    <organismsDiffer>false</organismsDiffer>
    <experiments>2</experiments>
</comment>
<comment type="interaction">
    <interactant intactId="EBI-912440">
        <id>Q96LA8</id>
    </interactant>
    <interactant intactId="EBI-356767">
        <id>Q96EY1</id>
        <label>DNAJA3</label>
    </interactant>
    <organismsDiffer>false</organismsDiffer>
    <experiments>2</experiments>
</comment>
<comment type="interaction">
    <interactant intactId="EBI-912440">
        <id>Q96LA8</id>
    </interactant>
    <interactant intactId="EBI-395638">
        <id>O14645</id>
        <label>DNALI1</label>
    </interactant>
    <organismsDiffer>false</organismsDiffer>
    <experiments>2</experiments>
</comment>
<comment type="interaction">
    <interactant intactId="EBI-912440">
        <id>Q96LA8</id>
    </interactant>
    <interactant intactId="EBI-6425658">
        <id>O75426</id>
        <label>FBXO24</label>
    </interactant>
    <organismsDiffer>false</organismsDiffer>
    <experiments>3</experiments>
</comment>
<comment type="interaction">
    <interactant intactId="EBI-912440">
        <id>Q96LA8</id>
    </interactant>
    <interactant intactId="EBI-2869338">
        <id>Q9BQS8</id>
        <label>FYCO1</label>
    </interactant>
    <organismsDiffer>false</organismsDiffer>
    <experiments>2</experiments>
</comment>
<comment type="interaction">
    <interactant intactId="EBI-912440">
        <id>Q96LA8</id>
    </interactant>
    <interactant intactId="EBI-8469396">
        <id>Q8TE85</id>
        <label>GRHL3</label>
    </interactant>
    <organismsDiffer>false</organismsDiffer>
    <experiments>2</experiments>
</comment>
<comment type="interaction">
    <interactant intactId="EBI-912440">
        <id>Q96LA8</id>
    </interactant>
    <interactant intactId="EBI-8469616">
        <id>Q8NEC7</id>
        <label>GSTCD</label>
    </interactant>
    <organismsDiffer>false</organismsDiffer>
    <experiments>2</experiments>
</comment>
<comment type="interaction">
    <interactant intactId="EBI-912440">
        <id>Q96LA8</id>
    </interactant>
    <interactant intactId="EBI-6115579">
        <id>Q9BX10</id>
        <label>GTPBP2</label>
    </interactant>
    <organismsDiffer>false</organismsDiffer>
    <experiments>2</experiments>
</comment>
<comment type="interaction">
    <interactant intactId="EBI-912440">
        <id>Q96LA8</id>
    </interactant>
    <interactant intactId="EBI-8470369">
        <id>Q9UBX0</id>
        <label>HESX1</label>
    </interactant>
    <organismsDiffer>false</organismsDiffer>
    <experiments>2</experiments>
</comment>
<comment type="interaction">
    <interactant intactId="EBI-912440">
        <id>Q96LA8</id>
    </interactant>
    <interactant intactId="EBI-746854">
        <id>P17096-1</id>
        <label>HMGA1</label>
    </interactant>
    <organismsDiffer>false</organismsDiffer>
    <experiments>4</experiments>
</comment>
<comment type="interaction">
    <interactant intactId="EBI-912440">
        <id>Q96LA8</id>
    </interactant>
    <interactant intactId="EBI-912511">
        <id>P52926</id>
        <label>HMGA2</label>
    </interactant>
    <organismsDiffer>false</organismsDiffer>
    <experiments>2</experiments>
</comment>
<comment type="interaction">
    <interactant intactId="EBI-912440">
        <id>Q96LA8</id>
    </interactant>
    <interactant intactId="EBI-8472129">
        <id>Q9HAQ2</id>
        <label>KIF9</label>
    </interactant>
    <organismsDiffer>false</organismsDiffer>
    <experiments>2</experiments>
</comment>
<comment type="interaction">
    <interactant intactId="EBI-912440">
        <id>Q96LA8</id>
    </interactant>
    <interactant intactId="EBI-714379">
        <id>Q9Y2M5</id>
        <label>KLHL20</label>
    </interactant>
    <organismsDiffer>false</organismsDiffer>
    <experiments>2</experiments>
</comment>
<comment type="interaction">
    <interactant intactId="EBI-912440">
        <id>Q96LA8</id>
    </interactant>
    <interactant intactId="EBI-926131">
        <id>Q9UJU2</id>
        <label>LEF1</label>
    </interactant>
    <organismsDiffer>false</organismsDiffer>
    <experiments>3</experiments>
</comment>
<comment type="interaction">
    <interactant intactId="EBI-912440">
        <id>Q96LA8</id>
    </interactant>
    <interactant intactId="EBI-749562">
        <id>Q96JB6</id>
        <label>LOXL4</label>
    </interactant>
    <organismsDiffer>false</organismsDiffer>
    <experiments>2</experiments>
</comment>
<comment type="interaction">
    <interactant intactId="EBI-912440">
        <id>Q96LA8</id>
    </interactant>
    <interactant intactId="EBI-514199">
        <id>Q9H204</id>
        <label>MED28</label>
    </interactant>
    <organismsDiffer>false</organismsDiffer>
    <experiments>2</experiments>
</comment>
<comment type="interaction">
    <interactant intactId="EBI-912440">
        <id>Q96LA8</id>
    </interactant>
    <interactant intactId="EBI-720441">
        <id>Q96DV4</id>
        <label>MRPL38</label>
    </interactant>
    <organismsDiffer>false</organismsDiffer>
    <experiments>3</experiments>
</comment>
<comment type="interaction">
    <interactant intactId="EBI-912440">
        <id>Q96LA8</id>
    </interactant>
    <interactant intactId="EBI-6144053">
        <id>Q14995</id>
        <label>NR1D2</label>
    </interactant>
    <organismsDiffer>false</organismsDiffer>
    <experiments>2</experiments>
</comment>
<comment type="interaction">
    <interactant intactId="EBI-912440">
        <id>Q96LA8</id>
    </interactant>
    <interactant intactId="EBI-3932815">
        <id>P00973</id>
        <label>OAS1</label>
    </interactant>
    <organismsDiffer>false</organismsDiffer>
    <experiments>2</experiments>
</comment>
<comment type="interaction">
    <interactant intactId="EBI-912440">
        <id>Q96LA8</id>
    </interactant>
    <interactant intactId="EBI-2827999">
        <id>Q86SE9</id>
        <label>PCGF5</label>
    </interactant>
    <organismsDiffer>false</organismsDiffer>
    <experiments>2</experiments>
</comment>
<comment type="interaction">
    <interactant intactId="EBI-912440">
        <id>Q96LA8</id>
    </interactant>
    <interactant intactId="EBI-357816">
        <id>O00231</id>
        <label>PSMD11</label>
    </interactant>
    <organismsDiffer>false</organismsDiffer>
    <experiments>2</experiments>
</comment>
<comment type="interaction">
    <interactant intactId="EBI-912440">
        <id>Q96LA8</id>
    </interactant>
    <interactant intactId="EBI-960081">
        <id>P50749</id>
        <label>RASSF2</label>
    </interactant>
    <organismsDiffer>false</organismsDiffer>
    <experiments>2</experiments>
</comment>
<comment type="interaction">
    <interactant intactId="EBI-912440">
        <id>Q96LA8</id>
    </interactant>
    <interactant intactId="EBI-465368">
        <id>Q9UGK8</id>
        <label>SERGEF</label>
    </interactant>
    <organismsDiffer>false</organismsDiffer>
    <experiments>2</experiments>
</comment>
<comment type="interaction">
    <interactant intactId="EBI-912440">
        <id>Q96LA8</id>
    </interactant>
    <interactant intactId="EBI-748763">
        <id>O15198</id>
        <label>SMAD9</label>
    </interactant>
    <organismsDiffer>false</organismsDiffer>
    <experiments>2</experiments>
</comment>
<comment type="interaction">
    <interactant intactId="EBI-912440">
        <id>Q96LA8</id>
    </interactant>
    <interactant intactId="EBI-747719">
        <id>Q96H20</id>
        <label>SNF8</label>
    </interactant>
    <organismsDiffer>false</organismsDiffer>
    <experiments>2</experiments>
</comment>
<comment type="interaction">
    <interactant intactId="EBI-912440">
        <id>Q96LA8</id>
    </interactant>
    <interactant intactId="EBI-2659201">
        <id>Q96BD6</id>
        <label>SPSB1</label>
    </interactant>
    <organismsDiffer>false</organismsDiffer>
    <experiments>2</experiments>
</comment>
<comment type="interaction">
    <interactant intactId="EBI-912440">
        <id>Q96LA8</id>
    </interactant>
    <interactant intactId="EBI-4289836">
        <id>Q9Y365</id>
        <label>STARD10</label>
    </interactant>
    <organismsDiffer>false</organismsDiffer>
    <experiments>2</experiments>
</comment>
<comment type="interaction">
    <interactant intactId="EBI-912440">
        <id>Q96LA8</id>
    </interactant>
    <interactant intactId="EBI-2873538">
        <id>Q8N1K5</id>
        <label>THEMIS</label>
    </interactant>
    <organismsDiffer>false</organismsDiffer>
    <experiments>2</experiments>
</comment>
<comment type="interaction">
    <interactant intactId="EBI-912440">
        <id>Q96LA8</id>
    </interactant>
    <interactant intactId="EBI-7560959">
        <id>Q9Y3A6</id>
        <label>TMED5</label>
    </interactant>
    <organismsDiffer>false</organismsDiffer>
    <experiments>2</experiments>
</comment>
<comment type="interaction">
    <interactant intactId="EBI-912440">
        <id>Q96LA8</id>
    </interactant>
    <interactant intactId="EBI-10174671">
        <id>A8K932</id>
    </interactant>
    <organismsDiffer>false</organismsDiffer>
    <experiments>3</experiments>
</comment>
<comment type="subcellular location">
    <subcellularLocation>
        <location evidence="5">Nucleus</location>
    </subcellularLocation>
</comment>
<comment type="alternative products">
    <event type="alternative splicing"/>
    <isoform>
        <id>Q96LA8-1</id>
        <name>1</name>
        <sequence type="displayed"/>
    </isoform>
    <isoform>
        <id>Q96LA8-2</id>
        <name>2</name>
        <sequence type="described" ref="VSP_037465"/>
    </isoform>
</comment>
<comment type="tissue specificity">
    <text evidence="5">Highly expressed in kidney and testis.</text>
</comment>
<comment type="PTM">
    <text>Automethylation enhances its stability and antiretroviral activity.</text>
</comment>
<comment type="similarity">
    <text evidence="3">Belongs to the class I-like SAM-binding methyltransferase superfamily. Protein arginine N-methyltransferase family. PRMT6 subfamily.</text>
</comment>
<comment type="sequence caution" evidence="27">
    <conflict type="erroneous initiation">
        <sequence resource="EMBL-CDS" id="AAH02729"/>
    </conflict>
    <text>Extended N-terminus.</text>
</comment>
<comment type="sequence caution" evidence="27">
    <conflict type="erroneous initiation">
        <sequence resource="EMBL-CDS" id="AAH63446"/>
    </conflict>
    <text>Extended N-terminus.</text>
</comment>
<comment type="sequence caution" evidence="27">
    <conflict type="erroneous initiation">
        <sequence resource="EMBL-CDS" id="BAA91681"/>
    </conflict>
    <text>Extended N-terminus.</text>
</comment>
<organism>
    <name type="scientific">Homo sapiens</name>
    <name type="common">Human</name>
    <dbReference type="NCBI Taxonomy" id="9606"/>
    <lineage>
        <taxon>Eukaryota</taxon>
        <taxon>Metazoa</taxon>
        <taxon>Chordata</taxon>
        <taxon>Craniata</taxon>
        <taxon>Vertebrata</taxon>
        <taxon>Euteleostomi</taxon>
        <taxon>Mammalia</taxon>
        <taxon>Eutheria</taxon>
        <taxon>Euarchontoglires</taxon>
        <taxon>Primates</taxon>
        <taxon>Haplorrhini</taxon>
        <taxon>Catarrhini</taxon>
        <taxon>Hominidae</taxon>
        <taxon>Homo</taxon>
    </lineage>
</organism>
<gene>
    <name type="primary">PRMT6</name>
    <name type="synonym">HRMT1L6</name>
</gene>
<reference key="1">
    <citation type="journal article" date="2002" name="J. Biol. Chem.">
        <title>The novel human protein arginine N-methyltransferase PRMT6 is a nuclear enzyme displaying unique substrate specificity.</title>
        <authorList>
            <person name="Frankel A."/>
            <person name="Yadav N."/>
            <person name="Lee J."/>
            <person name="Branscombe T.L."/>
            <person name="Clarke S."/>
            <person name="Bedford M.T."/>
        </authorList>
    </citation>
    <scope>NUCLEOTIDE SEQUENCE [MRNA] (ISOFORM 1)</scope>
    <scope>FUNCTION</scope>
    <scope>TISSUE SPECIFICITY</scope>
    <scope>SUBCELLULAR LOCATION</scope>
    <scope>METHYLATION AT ARG-35</scope>
    <source>
        <tissue>Kidney</tissue>
    </source>
</reference>
<reference key="2">
    <citation type="journal article" date="2004" name="Nat. Genet.">
        <title>Complete sequencing and characterization of 21,243 full-length human cDNAs.</title>
        <authorList>
            <person name="Ota T."/>
            <person name="Suzuki Y."/>
            <person name="Nishikawa T."/>
            <person name="Otsuki T."/>
            <person name="Sugiyama T."/>
            <person name="Irie R."/>
            <person name="Wakamatsu A."/>
            <person name="Hayashi K."/>
            <person name="Sato H."/>
            <person name="Nagai K."/>
            <person name="Kimura K."/>
            <person name="Makita H."/>
            <person name="Sekine M."/>
            <person name="Obayashi M."/>
            <person name="Nishi T."/>
            <person name="Shibahara T."/>
            <person name="Tanaka T."/>
            <person name="Ishii S."/>
            <person name="Yamamoto J."/>
            <person name="Saito K."/>
            <person name="Kawai Y."/>
            <person name="Isono Y."/>
            <person name="Nakamura Y."/>
            <person name="Nagahari K."/>
            <person name="Murakami K."/>
            <person name="Yasuda T."/>
            <person name="Iwayanagi T."/>
            <person name="Wagatsuma M."/>
            <person name="Shiratori A."/>
            <person name="Sudo H."/>
            <person name="Hosoiri T."/>
            <person name="Kaku Y."/>
            <person name="Kodaira H."/>
            <person name="Kondo H."/>
            <person name="Sugawara M."/>
            <person name="Takahashi M."/>
            <person name="Kanda K."/>
            <person name="Yokoi T."/>
            <person name="Furuya T."/>
            <person name="Kikkawa E."/>
            <person name="Omura Y."/>
            <person name="Abe K."/>
            <person name="Kamihara K."/>
            <person name="Katsuta N."/>
            <person name="Sato K."/>
            <person name="Tanikawa M."/>
            <person name="Yamazaki M."/>
            <person name="Ninomiya K."/>
            <person name="Ishibashi T."/>
            <person name="Yamashita H."/>
            <person name="Murakawa K."/>
            <person name="Fujimori K."/>
            <person name="Tanai H."/>
            <person name="Kimata M."/>
            <person name="Watanabe M."/>
            <person name="Hiraoka S."/>
            <person name="Chiba Y."/>
            <person name="Ishida S."/>
            <person name="Ono Y."/>
            <person name="Takiguchi S."/>
            <person name="Watanabe S."/>
            <person name="Yosida M."/>
            <person name="Hotuta T."/>
            <person name="Kusano J."/>
            <person name="Kanehori K."/>
            <person name="Takahashi-Fujii A."/>
            <person name="Hara H."/>
            <person name="Tanase T.-O."/>
            <person name="Nomura Y."/>
            <person name="Togiya S."/>
            <person name="Komai F."/>
            <person name="Hara R."/>
            <person name="Takeuchi K."/>
            <person name="Arita M."/>
            <person name="Imose N."/>
            <person name="Musashino K."/>
            <person name="Yuuki H."/>
            <person name="Oshima A."/>
            <person name="Sasaki N."/>
            <person name="Aotsuka S."/>
            <person name="Yoshikawa Y."/>
            <person name="Matsunawa H."/>
            <person name="Ichihara T."/>
            <person name="Shiohata N."/>
            <person name="Sano S."/>
            <person name="Moriya S."/>
            <person name="Momiyama H."/>
            <person name="Satoh N."/>
            <person name="Takami S."/>
            <person name="Terashima Y."/>
            <person name="Suzuki O."/>
            <person name="Nakagawa S."/>
            <person name="Senoh A."/>
            <person name="Mizoguchi H."/>
            <person name="Goto Y."/>
            <person name="Shimizu F."/>
            <person name="Wakebe H."/>
            <person name="Hishigaki H."/>
            <person name="Watanabe T."/>
            <person name="Sugiyama A."/>
            <person name="Takemoto M."/>
            <person name="Kawakami B."/>
            <person name="Yamazaki M."/>
            <person name="Watanabe K."/>
            <person name="Kumagai A."/>
            <person name="Itakura S."/>
            <person name="Fukuzumi Y."/>
            <person name="Fujimori Y."/>
            <person name="Komiyama M."/>
            <person name="Tashiro H."/>
            <person name="Tanigami A."/>
            <person name="Fujiwara T."/>
            <person name="Ono T."/>
            <person name="Yamada K."/>
            <person name="Fujii Y."/>
            <person name="Ozaki K."/>
            <person name="Hirao M."/>
            <person name="Ohmori Y."/>
            <person name="Kawabata A."/>
            <person name="Hikiji T."/>
            <person name="Kobatake N."/>
            <person name="Inagaki H."/>
            <person name="Ikema Y."/>
            <person name="Okamoto S."/>
            <person name="Okitani R."/>
            <person name="Kawakami T."/>
            <person name="Noguchi S."/>
            <person name="Itoh T."/>
            <person name="Shigeta K."/>
            <person name="Senba T."/>
            <person name="Matsumura K."/>
            <person name="Nakajima Y."/>
            <person name="Mizuno T."/>
            <person name="Morinaga M."/>
            <person name="Sasaki M."/>
            <person name="Togashi T."/>
            <person name="Oyama M."/>
            <person name="Hata H."/>
            <person name="Watanabe M."/>
            <person name="Komatsu T."/>
            <person name="Mizushima-Sugano J."/>
            <person name="Satoh T."/>
            <person name="Shirai Y."/>
            <person name="Takahashi Y."/>
            <person name="Nakagawa K."/>
            <person name="Okumura K."/>
            <person name="Nagase T."/>
            <person name="Nomura N."/>
            <person name="Kikuchi H."/>
            <person name="Masuho Y."/>
            <person name="Yamashita R."/>
            <person name="Nakai K."/>
            <person name="Yada T."/>
            <person name="Nakamura Y."/>
            <person name="Ohara O."/>
            <person name="Isogai T."/>
            <person name="Sugano S."/>
        </authorList>
    </citation>
    <scope>NUCLEOTIDE SEQUENCE [LARGE SCALE MRNA] (ISOFORM 2)</scope>
    <scope>NUCLEOTIDE SEQUENCE [LARGE SCALE MRNA] OF 25-375 (ISOFORM 1)</scope>
    <source>
        <tissue>Hippocampus</tissue>
        <tissue>Teratocarcinoma</tissue>
    </source>
</reference>
<reference key="3">
    <citation type="journal article" date="2006" name="Nature">
        <title>The DNA sequence and biological annotation of human chromosome 1.</title>
        <authorList>
            <person name="Gregory S.G."/>
            <person name="Barlow K.F."/>
            <person name="McLay K.E."/>
            <person name="Kaul R."/>
            <person name="Swarbreck D."/>
            <person name="Dunham A."/>
            <person name="Scott C.E."/>
            <person name="Howe K.L."/>
            <person name="Woodfine K."/>
            <person name="Spencer C.C.A."/>
            <person name="Jones M.C."/>
            <person name="Gillson C."/>
            <person name="Searle S."/>
            <person name="Zhou Y."/>
            <person name="Kokocinski F."/>
            <person name="McDonald L."/>
            <person name="Evans R."/>
            <person name="Phillips K."/>
            <person name="Atkinson A."/>
            <person name="Cooper R."/>
            <person name="Jones C."/>
            <person name="Hall R.E."/>
            <person name="Andrews T.D."/>
            <person name="Lloyd C."/>
            <person name="Ainscough R."/>
            <person name="Almeida J.P."/>
            <person name="Ambrose K.D."/>
            <person name="Anderson F."/>
            <person name="Andrew R.W."/>
            <person name="Ashwell R.I.S."/>
            <person name="Aubin K."/>
            <person name="Babbage A.K."/>
            <person name="Bagguley C.L."/>
            <person name="Bailey J."/>
            <person name="Beasley H."/>
            <person name="Bethel G."/>
            <person name="Bird C.P."/>
            <person name="Bray-Allen S."/>
            <person name="Brown J.Y."/>
            <person name="Brown A.J."/>
            <person name="Buckley D."/>
            <person name="Burton J."/>
            <person name="Bye J."/>
            <person name="Carder C."/>
            <person name="Chapman J.C."/>
            <person name="Clark S.Y."/>
            <person name="Clarke G."/>
            <person name="Clee C."/>
            <person name="Cobley V."/>
            <person name="Collier R.E."/>
            <person name="Corby N."/>
            <person name="Coville G.J."/>
            <person name="Davies J."/>
            <person name="Deadman R."/>
            <person name="Dunn M."/>
            <person name="Earthrowl M."/>
            <person name="Ellington A.G."/>
            <person name="Errington H."/>
            <person name="Frankish A."/>
            <person name="Frankland J."/>
            <person name="French L."/>
            <person name="Garner P."/>
            <person name="Garnett J."/>
            <person name="Gay L."/>
            <person name="Ghori M.R.J."/>
            <person name="Gibson R."/>
            <person name="Gilby L.M."/>
            <person name="Gillett W."/>
            <person name="Glithero R.J."/>
            <person name="Grafham D.V."/>
            <person name="Griffiths C."/>
            <person name="Griffiths-Jones S."/>
            <person name="Grocock R."/>
            <person name="Hammond S."/>
            <person name="Harrison E.S.I."/>
            <person name="Hart E."/>
            <person name="Haugen E."/>
            <person name="Heath P.D."/>
            <person name="Holmes S."/>
            <person name="Holt K."/>
            <person name="Howden P.J."/>
            <person name="Hunt A.R."/>
            <person name="Hunt S.E."/>
            <person name="Hunter G."/>
            <person name="Isherwood J."/>
            <person name="James R."/>
            <person name="Johnson C."/>
            <person name="Johnson D."/>
            <person name="Joy A."/>
            <person name="Kay M."/>
            <person name="Kershaw J.K."/>
            <person name="Kibukawa M."/>
            <person name="Kimberley A.M."/>
            <person name="King A."/>
            <person name="Knights A.J."/>
            <person name="Lad H."/>
            <person name="Laird G."/>
            <person name="Lawlor S."/>
            <person name="Leongamornlert D.A."/>
            <person name="Lloyd D.M."/>
            <person name="Loveland J."/>
            <person name="Lovell J."/>
            <person name="Lush M.J."/>
            <person name="Lyne R."/>
            <person name="Martin S."/>
            <person name="Mashreghi-Mohammadi M."/>
            <person name="Matthews L."/>
            <person name="Matthews N.S.W."/>
            <person name="McLaren S."/>
            <person name="Milne S."/>
            <person name="Mistry S."/>
            <person name="Moore M.J.F."/>
            <person name="Nickerson T."/>
            <person name="O'Dell C.N."/>
            <person name="Oliver K."/>
            <person name="Palmeiri A."/>
            <person name="Palmer S.A."/>
            <person name="Parker A."/>
            <person name="Patel D."/>
            <person name="Pearce A.V."/>
            <person name="Peck A.I."/>
            <person name="Pelan S."/>
            <person name="Phelps K."/>
            <person name="Phillimore B.J."/>
            <person name="Plumb R."/>
            <person name="Rajan J."/>
            <person name="Raymond C."/>
            <person name="Rouse G."/>
            <person name="Saenphimmachak C."/>
            <person name="Sehra H.K."/>
            <person name="Sheridan E."/>
            <person name="Shownkeen R."/>
            <person name="Sims S."/>
            <person name="Skuce C.D."/>
            <person name="Smith M."/>
            <person name="Steward C."/>
            <person name="Subramanian S."/>
            <person name="Sycamore N."/>
            <person name="Tracey A."/>
            <person name="Tromans A."/>
            <person name="Van Helmond Z."/>
            <person name="Wall M."/>
            <person name="Wallis J.M."/>
            <person name="White S."/>
            <person name="Whitehead S.L."/>
            <person name="Wilkinson J.E."/>
            <person name="Willey D.L."/>
            <person name="Williams H."/>
            <person name="Wilming L."/>
            <person name="Wray P.W."/>
            <person name="Wu Z."/>
            <person name="Coulson A."/>
            <person name="Vaudin M."/>
            <person name="Sulston J.E."/>
            <person name="Durbin R.M."/>
            <person name="Hubbard T."/>
            <person name="Wooster R."/>
            <person name="Dunham I."/>
            <person name="Carter N.P."/>
            <person name="McVean G."/>
            <person name="Ross M.T."/>
            <person name="Harrow J."/>
            <person name="Olson M.V."/>
            <person name="Beck S."/>
            <person name="Rogers J."/>
            <person name="Bentley D.R."/>
        </authorList>
    </citation>
    <scope>NUCLEOTIDE SEQUENCE [LARGE SCALE GENOMIC DNA]</scope>
</reference>
<reference key="4">
    <citation type="submission" date="2005-09" db="EMBL/GenBank/DDBJ databases">
        <authorList>
            <person name="Mural R.J."/>
            <person name="Istrail S."/>
            <person name="Sutton G.G."/>
            <person name="Florea L."/>
            <person name="Halpern A.L."/>
            <person name="Mobarry C.M."/>
            <person name="Lippert R."/>
            <person name="Walenz B."/>
            <person name="Shatkay H."/>
            <person name="Dew I."/>
            <person name="Miller J.R."/>
            <person name="Flanigan M.J."/>
            <person name="Edwards N.J."/>
            <person name="Bolanos R."/>
            <person name="Fasulo D."/>
            <person name="Halldorsson B.V."/>
            <person name="Hannenhalli S."/>
            <person name="Turner R."/>
            <person name="Yooseph S."/>
            <person name="Lu F."/>
            <person name="Nusskern D.R."/>
            <person name="Shue B.C."/>
            <person name="Zheng X.H."/>
            <person name="Zhong F."/>
            <person name="Delcher A.L."/>
            <person name="Huson D.H."/>
            <person name="Kravitz S.A."/>
            <person name="Mouchard L."/>
            <person name="Reinert K."/>
            <person name="Remington K.A."/>
            <person name="Clark A.G."/>
            <person name="Waterman M.S."/>
            <person name="Eichler E.E."/>
            <person name="Adams M.D."/>
            <person name="Hunkapiller M.W."/>
            <person name="Myers E.W."/>
            <person name="Venter J.C."/>
        </authorList>
    </citation>
    <scope>NUCLEOTIDE SEQUENCE [LARGE SCALE GENOMIC DNA]</scope>
</reference>
<reference key="5">
    <citation type="journal article" date="2004" name="Genome Res.">
        <title>The status, quality, and expansion of the NIH full-length cDNA project: the Mammalian Gene Collection (MGC).</title>
        <authorList>
            <consortium name="The MGC Project Team"/>
        </authorList>
    </citation>
    <scope>NUCLEOTIDE SEQUENCE [LARGE SCALE MRNA] (ISOFORM 1)</scope>
    <scope>VARIANT VAL-194</scope>
    <source>
        <tissue>Blood</tissue>
        <tissue>Eye</tissue>
        <tissue>Placenta</tissue>
    </source>
</reference>
<reference key="6">
    <citation type="journal article" date="2007" name="BMC Genomics">
        <title>The full-ORF clone resource of the German cDNA consortium.</title>
        <authorList>
            <person name="Bechtel S."/>
            <person name="Rosenfelder H."/>
            <person name="Duda A."/>
            <person name="Schmidt C.P."/>
            <person name="Ernst U."/>
            <person name="Wellenreuther R."/>
            <person name="Mehrle A."/>
            <person name="Schuster C."/>
            <person name="Bahr A."/>
            <person name="Bloecker H."/>
            <person name="Heubner D."/>
            <person name="Hoerlein A."/>
            <person name="Michel G."/>
            <person name="Wedler H."/>
            <person name="Koehrer K."/>
            <person name="Ottenwaelder B."/>
            <person name="Poustka A."/>
            <person name="Wiemann S."/>
            <person name="Schupp I."/>
        </authorList>
    </citation>
    <scope>NUCLEOTIDE SEQUENCE [LARGE SCALE MRNA] OF 230-375 (ISOFORMS 1/2)</scope>
</reference>
<reference key="7">
    <citation type="journal article" date="2004" name="Oncogene">
        <title>DAL-1/4.1B tumor suppressor interacts with protein arginine N-methyltransferase 3 (PRMT3) and inhibits its ability to methylate substrates in vitro and in vivo.</title>
        <authorList>
            <person name="Singh V."/>
            <person name="Miranda T.B."/>
            <person name="Jiang W."/>
            <person name="Frankel A."/>
            <person name="Roemer M.E."/>
            <person name="Robb V.A."/>
            <person name="Gutmann D.H."/>
            <person name="Herschman H.R."/>
            <person name="Clarke S."/>
            <person name="Newsham I.F."/>
        </authorList>
    </citation>
    <scope>INTERACTION WITH EPB41L3</scope>
</reference>
<reference key="8">
    <citation type="journal article" date="2005" name="J. Virol.">
        <title>Methylation of Tat by PRMT6 regulates human immunodeficiency virus type 1 gene expression.</title>
        <authorList>
            <person name="Boulanger M.C."/>
            <person name="Liang C."/>
            <person name="Russell R.S."/>
            <person name="Lin R."/>
            <person name="Bedford M.T."/>
            <person name="Wainberg M.A."/>
            <person name="Richard S."/>
        </authorList>
    </citation>
    <scope>INTERACTION WITH HIV-1 TAT (MICROBIAL INFECTION)</scope>
</reference>
<reference key="9">
    <citation type="journal article" date="2005" name="Biochem. Biophys. Res. Commun.">
        <title>Protein arginine methyltransferase 6 specifically methylates the nonhistone chromatin protein HMGA1a.</title>
        <authorList>
            <person name="Miranda T.B."/>
            <person name="Webb K.J."/>
            <person name="Edberg D.D."/>
            <person name="Reeves R."/>
            <person name="Clarke S."/>
        </authorList>
    </citation>
    <scope>FUNCTION</scope>
    <scope>INTERACTION WITH HMGA1</scope>
</reference>
<reference key="10">
    <citation type="journal article" date="2005" name="J. Biol. Chem.">
        <title>Dynamics of human protein arginine methyltransferase 1(PRMT1) in vivo.</title>
        <authorList>
            <person name="Herrmann F."/>
            <person name="Lee J."/>
            <person name="Bedford M.T."/>
            <person name="Fackelmayer F.O."/>
        </authorList>
    </citation>
    <scope>FUNCTION</scope>
    <scope>INTERACTION WITH HMGA1</scope>
</reference>
<reference key="11">
    <citation type="journal article" date="2006" name="Mol. Cell">
        <title>Arginine methylation regulates DNA polymerase beta.</title>
        <authorList>
            <person name="El-Andaloussi N."/>
            <person name="Valovka T."/>
            <person name="Toueille M."/>
            <person name="Steinacher R."/>
            <person name="Focke F."/>
            <person name="Gehrig P."/>
            <person name="Covic M."/>
            <person name="Hassa P.O."/>
            <person name="Schaer P."/>
            <person name="Huebscher U."/>
            <person name="Hottiger M.O."/>
        </authorList>
    </citation>
    <scope>FUNCTION</scope>
    <scope>INTERACTION WITH POLB</scope>
</reference>
<reference key="12">
    <citation type="journal article" date="2006" name="Retrovirology">
        <title>PRMT6 diminishes HIV-1 Rev binding to and export of viral RNA.</title>
        <authorList>
            <person name="Invernizzi C.F."/>
            <person name="Xie B."/>
            <person name="Richard S."/>
            <person name="Wainberg M.A."/>
        </authorList>
    </citation>
    <scope>INTERACTION WITH HIV-1 REV (MICROBIAL INFECTION)</scope>
</reference>
<reference key="13">
    <citation type="journal article" date="2007" name="AIDS">
        <title>Arginine methylation of the HIV-1 nucleocapsid protein results in its diminished function.</title>
        <authorList>
            <person name="Invernizzi C.F."/>
            <person name="Xie B."/>
            <person name="Frankel F.A."/>
            <person name="Feldhammer M."/>
            <person name="Roy B.B."/>
            <person name="Richard S."/>
            <person name="Wainberg M.A."/>
        </authorList>
    </citation>
    <scope>INTERACTION WITH HIV-1 NC (MICROBIAL INFECTION)</scope>
</reference>
<reference key="14">
    <citation type="journal article" date="2007" name="J. Virol.">
        <title>Arginine methylation of the human immunodeficiency virus type 1 Tat protein by PRMT6 negatively affects Tat Interactions with both cyclin T1 and the Tat transactivation region.</title>
        <authorList>
            <person name="Xie B."/>
            <person name="Invernizzi C.F."/>
            <person name="Richard S."/>
            <person name="Wainberg M.A."/>
        </authorList>
    </citation>
    <scope>FUNCTION</scope>
    <scope>INTERACTION WITH HIV-1 TAT (MICROBIAL INFECTION)</scope>
</reference>
<reference key="15">
    <citation type="journal article" date="2007" name="Nature">
        <title>Methylation of histone H3R2 by PRMT6 and H3K4 by an MLL complex are mutually exclusive.</title>
        <authorList>
            <person name="Guccione E."/>
            <person name="Bassi C."/>
            <person name="Casadio F."/>
            <person name="Martinato F."/>
            <person name="Cesaroni M."/>
            <person name="Schuchlautz H."/>
            <person name="Luescher B."/>
            <person name="Amati B."/>
        </authorList>
    </citation>
    <scope>FUNCTION</scope>
    <scope>CATALYTIC ACTIVITY</scope>
    <scope>MUTAGENESIS OF 86-VAL--ASP-88</scope>
</reference>
<reference key="16">
    <citation type="journal article" date="2007" name="Genes Dev.">
        <title>PRMT6-mediated methylation of R2 in histone H3 antagonizes H3 K4 trimethylation.</title>
        <authorList>
            <person name="Hyllus D."/>
            <person name="Stein C."/>
            <person name="Schnabel K."/>
            <person name="Schiltz E."/>
            <person name="Imhof A."/>
            <person name="Dou Y."/>
            <person name="Hsieh J."/>
            <person name="Bauer U.M."/>
        </authorList>
    </citation>
    <scope>FUNCTION</scope>
    <scope>CATALYTIC ACTIVITY</scope>
</reference>
<reference key="17">
    <citation type="journal article" date="2008" name="J. Biol. Chem.">
        <title>Arginine methylation of the histone H3 tail impedes effector binding.</title>
        <authorList>
            <person name="Iberg A.N."/>
            <person name="Espejo A."/>
            <person name="Cheng D."/>
            <person name="Kim D."/>
            <person name="Michaud-Levesque J."/>
            <person name="Richard S."/>
            <person name="Bedford M.T."/>
        </authorList>
    </citation>
    <scope>FUNCTION</scope>
    <scope>CATALYTIC ACTIVITY</scope>
</reference>
<reference key="18">
    <citation type="journal article" date="2008" name="J. Biol. Chem.">
        <title>A kinetic study of human protein arginine N-methyltransferase 6 reveals a distributive mechanism.</title>
        <authorList>
            <person name="Lakowski T.M."/>
            <person name="Frankel A."/>
        </authorList>
    </citation>
    <scope>BIOPHYSICOCHEMICAL PROPERTIES</scope>
</reference>
<reference key="19">
    <citation type="journal article" date="2008" name="Mol. Cell">
        <title>Kinase-selective enrichment enables quantitative phosphoproteomics of the kinome across the cell cycle.</title>
        <authorList>
            <person name="Daub H."/>
            <person name="Olsen J.V."/>
            <person name="Bairlein M."/>
            <person name="Gnad F."/>
            <person name="Oppermann F.S."/>
            <person name="Korner R."/>
            <person name="Greff Z."/>
            <person name="Keri G."/>
            <person name="Stemmann O."/>
            <person name="Mann M."/>
        </authorList>
    </citation>
    <scope>PHOSPHORYLATION [LARGE SCALE ANALYSIS] AT THR-21</scope>
    <scope>IDENTIFICATION BY MASS SPECTROMETRY [LARGE SCALE ANALYSIS]</scope>
    <source>
        <tissue>Cervix carcinoma</tissue>
    </source>
</reference>
<reference key="20">
    <citation type="journal article" date="2009" name="Biochem. J.">
        <title>Kinetic analysis of human protein arginine N-methyltransferase 2: formation of monomethyl- and asymmetric dimethyl-arginine residues on histone H4.</title>
        <authorList>
            <person name="Lakowski T.M."/>
            <person name="Frankel A."/>
        </authorList>
    </citation>
    <scope>FUNCTION</scope>
    <scope>CATALYTIC ACTIVITY</scope>
</reference>
<reference key="21">
    <citation type="journal article" date="2009" name="J. Biol. Chem.">
        <title>Thrombospondin-1 is a transcriptional repression target of PRMT6.</title>
        <authorList>
            <person name="Michaud-Levesque J."/>
            <person name="Richard S."/>
        </authorList>
    </citation>
    <scope>FUNCTION</scope>
</reference>
<reference key="22">
    <citation type="journal article" date="2010" name="Nucleic Acids Res.">
        <title>Protein arginine methyltransferase 6 regulates multiple aspects of gene expression.</title>
        <authorList>
            <person name="Harrison M.J."/>
            <person name="Tang Y.H."/>
            <person name="Dowhan D.H."/>
        </authorList>
    </citation>
    <scope>FUNCTION</scope>
    <scope>INTERACTION WITH NCOA1</scope>
    <scope>MUTAGENESIS OF 86-VAL--ASP-88</scope>
</reference>
<reference key="23">
    <citation type="journal article" date="2011" name="BMC Syst. Biol.">
        <title>Initial characterization of the human central proteome.</title>
        <authorList>
            <person name="Burkard T.R."/>
            <person name="Planyavsky M."/>
            <person name="Kaupe I."/>
            <person name="Breitwieser F.P."/>
            <person name="Buerckstuemmer T."/>
            <person name="Bennett K.L."/>
            <person name="Superti-Furga G."/>
            <person name="Colinge J."/>
        </authorList>
    </citation>
    <scope>IDENTIFICATION BY MASS SPECTROMETRY [LARGE SCALE ANALYSIS]</scope>
</reference>
<reference key="24">
    <citation type="journal article" date="2013" name="J. Proteome Res.">
        <title>Toward a comprehensive characterization of a human cancer cell phosphoproteome.</title>
        <authorList>
            <person name="Zhou H."/>
            <person name="Di Palma S."/>
            <person name="Preisinger C."/>
            <person name="Peng M."/>
            <person name="Polat A.N."/>
            <person name="Heck A.J."/>
            <person name="Mohammed S."/>
        </authorList>
    </citation>
    <scope>PHOSPHORYLATION [LARGE SCALE ANALYSIS] AT THR-21</scope>
    <scope>IDENTIFICATION BY MASS SPECTROMETRY [LARGE SCALE ANALYSIS]</scope>
    <source>
        <tissue>Cervix carcinoma</tissue>
        <tissue>Erythroleukemia</tissue>
    </source>
</reference>
<reference key="25">
    <citation type="journal article" date="2013" name="Retrovirology">
        <title>Automethylation of protein arginine methyltransferase 6 (PRMT6) regulates its stability and its anti-HIV-1 activity.</title>
        <authorList>
            <person name="Singhroy D.N."/>
            <person name="Mesplede T."/>
            <person name="Sabbah A."/>
            <person name="Quashie P.K."/>
            <person name="Falgueyret J.P."/>
            <person name="Wainberg M.A."/>
        </authorList>
    </citation>
    <scope>METHYLATION AT ARG-29; ARG-35 AND ARG-37</scope>
    <scope>MUTAGENESIS OF ARG-35 AND 86-VAL--ASP-88</scope>
</reference>
<reference key="26">
    <citation type="journal article" date="2015" name="J. Virol.">
        <title>pUL69 of human cytomegalovirus recruits the cellular protein arginine methyltransferase 6 via a domain that is crucial for mRNA export and efficient viral replication.</title>
        <authorList>
            <person name="Thomas M."/>
            <person name="Sonntag E."/>
            <person name="Mueller R."/>
            <person name="Schmidt S."/>
            <person name="Zielke B."/>
            <person name="Fossen T."/>
            <person name="Stamminger T."/>
        </authorList>
    </citation>
    <scope>INTERACTION WITH HUMAN CYTOMEGALOVIRUS PROTEIN UL69</scope>
</reference>
<reference key="27">
    <citation type="journal article" date="2018" name="EMBO Rep.">
        <title>Arginine methylation of SIRT7 couples glucose sensing with mitochondria biogenesis.</title>
        <authorList>
            <person name="Yan W.W."/>
            <person name="Liang Y.L."/>
            <person name="Zhang Q.X."/>
            <person name="Wang D."/>
            <person name="Lei M.Z."/>
            <person name="Qu J."/>
            <person name="He X.H."/>
            <person name="Lei Q.Y."/>
            <person name="Wang Y.P."/>
        </authorList>
    </citation>
    <scope>FUNCTION</scope>
    <scope>CATALYTIC ACTIVITY</scope>
    <scope>MUTAGENESIS OF 86-VAL--ASP-88</scope>
</reference>
<reference key="28">
    <citation type="submission" date="2012-10" db="PDB data bank">
        <title>The crystal structure of human HMT1 HNRNP methyltransferase-like protein 6 in complex with SAH.</title>
        <authorList>
            <consortium name="Structural genomics consortium (SGC)"/>
        </authorList>
    </citation>
    <scope>X-RAY CRYSTALLOGRAPHY (1.97 ANGSTROMS) IN COMPLEX WITH S-ADENOSYLHOMOCYSTEINE</scope>
</reference>
<accession>Q96LA8</accession>
<accession>A3KME1</accession>
<accession>B4DID8</accession>
<accession>Q5T5Y5</accession>
<accession>Q6DKI4</accession>
<accession>Q9NVR8</accession>
<protein>
    <recommendedName>
        <fullName>Protein arginine N-methyltransferase 6</fullName>
        <ecNumber evidence="15 16 17 19 24">2.1.1.319</ecNumber>
    </recommendedName>
    <alternativeName>
        <fullName>Heterogeneous nuclear ribonucleoprotein methyltransferase-like protein 6</fullName>
    </alternativeName>
    <alternativeName>
        <fullName>Histone-arginine N-methyltransferase PRMT6</fullName>
    </alternativeName>
</protein>
<keyword id="KW-0002">3D-structure</keyword>
<keyword id="KW-0025">Alternative splicing</keyword>
<keyword id="KW-0156">Chromatin regulator</keyword>
<keyword id="KW-0227">DNA damage</keyword>
<keyword id="KW-0234">DNA repair</keyword>
<keyword id="KW-0945">Host-virus interaction</keyword>
<keyword id="KW-0488">Methylation</keyword>
<keyword id="KW-0489">Methyltransferase</keyword>
<keyword id="KW-0539">Nucleus</keyword>
<keyword id="KW-0597">Phosphoprotein</keyword>
<keyword id="KW-1267">Proteomics identification</keyword>
<keyword id="KW-1185">Reference proteome</keyword>
<keyword id="KW-0678">Repressor</keyword>
<keyword id="KW-0949">S-adenosyl-L-methionine</keyword>
<keyword id="KW-0804">Transcription</keyword>
<keyword id="KW-0805">Transcription regulation</keyword>
<keyword id="KW-0808">Transferase</keyword>
<sequence>MSQPKKRKLESGGGGEGGEGTEEEDGAEREAALERPRRTKRERDQLYYECYSDVSVHEEMIADRVRTDAYRLGILRNWAALRGKTVLDVGAGTGILSIFCAQAGARRVYAVEASAIWQQAREVVRFNGLEDRVHVLPGPVETVELPEQVDAIVSEWMGYGLLHESMLSSVLHARTKWLKEGGLLLPASAELFIAPISDQMLEWRLGFWSQVKQHYGVDMSCLEGFATRCLMGHSEIVVQGLSGEDVLARPQRFAQLELSRAGLEQELEAGVGGRFRCSCYGSAPMHGFAIWFQVTFPGGESEKPLVLSTSPFHPATHWKQALLYLNEPVQVEQDTDVSGEITLLPSRDNPRRLRVLLRYKVGDQEEKTKDFAMED</sequence>
<feature type="chain" id="PRO_0000212332" description="Protein arginine N-methyltransferase 6">
    <location>
        <begin position="1"/>
        <end position="375"/>
    </location>
</feature>
<feature type="domain" description="SAM-dependent MTase PRMT-type" evidence="3">
    <location>
        <begin position="44"/>
        <end position="374"/>
    </location>
</feature>
<feature type="region of interest" description="Disordered" evidence="4">
    <location>
        <begin position="1"/>
        <end position="38"/>
    </location>
</feature>
<feature type="compositionally biased region" description="Basic and acidic residues" evidence="4">
    <location>
        <begin position="28"/>
        <end position="38"/>
    </location>
</feature>
<feature type="active site" evidence="1">
    <location>
        <position position="155"/>
    </location>
</feature>
<feature type="active site" evidence="1">
    <location>
        <position position="164"/>
    </location>
</feature>
<feature type="binding site" evidence="1">
    <location>
        <position position="57"/>
    </location>
    <ligand>
        <name>S-adenosyl-L-methionine</name>
        <dbReference type="ChEBI" id="CHEBI:59789"/>
    </ligand>
</feature>
<feature type="binding site">
    <location>
        <position position="66"/>
    </location>
    <ligand>
        <name>S-adenosyl-L-methionine</name>
        <dbReference type="ChEBI" id="CHEBI:59789"/>
    </ligand>
</feature>
<feature type="binding site">
    <location>
        <position position="90"/>
    </location>
    <ligand>
        <name>S-adenosyl-L-methionine</name>
        <dbReference type="ChEBI" id="CHEBI:59789"/>
    </ligand>
</feature>
<feature type="binding site">
    <location>
        <position position="112"/>
    </location>
    <ligand>
        <name>S-adenosyl-L-methionine</name>
        <dbReference type="ChEBI" id="CHEBI:59789"/>
    </ligand>
</feature>
<feature type="binding site">
    <location>
        <position position="141"/>
    </location>
    <ligand>
        <name>S-adenosyl-L-methionine</name>
        <dbReference type="ChEBI" id="CHEBI:59789"/>
    </ligand>
</feature>
<feature type="modified residue" description="Phosphothreonine" evidence="28 29">
    <location>
        <position position="21"/>
    </location>
</feature>
<feature type="modified residue" description="Asymmetric dimethylarginine; by autocatalysis" evidence="22">
    <location>
        <position position="29"/>
    </location>
</feature>
<feature type="modified residue" description="Asymmetric dimethylarginine; by autocatalysis" evidence="22">
    <location>
        <position position="35"/>
    </location>
</feature>
<feature type="modified residue" description="Asymmetric dimethylarginine; by autocatalysis" evidence="22">
    <location>
        <position position="37"/>
    </location>
</feature>
<feature type="splice variant" id="VSP_037465" description="In isoform 2." evidence="26">
    <original>GAEREAALERPRRTKRERDQLYYECYSDVSVHEEMIADRVRTDAYRLGILRNWAALRGKTVLDVGAGTGILSIFCAQAGARRVY</original>
    <variation>D</variation>
    <location>
        <begin position="26"/>
        <end position="109"/>
    </location>
</feature>
<feature type="sequence variant" id="VAR_057150" description="In dbSNP:rs2232016." evidence="7">
    <original>A</original>
    <variation>V</variation>
    <location>
        <position position="194"/>
    </location>
</feature>
<feature type="mutagenesis site" description="Inhibits automethylation but does not affect methylation of other proteins. Reduces protein stability." evidence="22">
    <original>R</original>
    <variation>A</variation>
    <location>
        <position position="35"/>
    </location>
</feature>
<feature type="mutagenesis site" description="In PRMT6dn; abolishes histone methyltransferase H3R2me2a and transcriptional coactivator activities and reduces protein stability. This mutation abolishes automethylation." evidence="15 21 22 24">
    <original>VLD</original>
    <variation>KLA</variation>
    <location>
        <begin position="86"/>
        <end position="88"/>
    </location>
</feature>
<feature type="helix" evidence="31">
    <location>
        <begin position="26"/>
        <end position="38"/>
    </location>
</feature>
<feature type="helix" evidence="32">
    <location>
        <begin position="40"/>
        <end position="50"/>
    </location>
</feature>
<feature type="helix" evidence="30">
    <location>
        <begin position="51"/>
        <end position="62"/>
    </location>
</feature>
<feature type="helix" evidence="30">
    <location>
        <begin position="64"/>
        <end position="75"/>
    </location>
</feature>
<feature type="helix" evidence="30">
    <location>
        <begin position="78"/>
        <end position="81"/>
    </location>
</feature>
<feature type="strand" evidence="30">
    <location>
        <begin position="85"/>
        <end position="90"/>
    </location>
</feature>
<feature type="helix" evidence="30">
    <location>
        <begin position="95"/>
        <end position="102"/>
    </location>
</feature>
<feature type="strand" evidence="30">
    <location>
        <begin position="106"/>
        <end position="112"/>
    </location>
</feature>
<feature type="helix" evidence="30">
    <location>
        <begin position="117"/>
        <end position="126"/>
    </location>
</feature>
<feature type="turn" evidence="30">
    <location>
        <begin position="130"/>
        <end position="132"/>
    </location>
</feature>
<feature type="strand" evidence="30">
    <location>
        <begin position="133"/>
        <end position="138"/>
    </location>
</feature>
<feature type="turn" evidence="30">
    <location>
        <begin position="140"/>
        <end position="142"/>
    </location>
</feature>
<feature type="strand" evidence="30">
    <location>
        <begin position="149"/>
        <end position="153"/>
    </location>
</feature>
<feature type="strand" evidence="30">
    <location>
        <begin position="158"/>
        <end position="163"/>
    </location>
</feature>
<feature type="helix" evidence="30">
    <location>
        <begin position="167"/>
        <end position="177"/>
    </location>
</feature>
<feature type="strand" evidence="30">
    <location>
        <begin position="178"/>
        <end position="186"/>
    </location>
</feature>
<feature type="strand" evidence="30">
    <location>
        <begin position="188"/>
        <end position="196"/>
    </location>
</feature>
<feature type="helix" evidence="30">
    <location>
        <begin position="199"/>
        <end position="206"/>
    </location>
</feature>
<feature type="helix" evidence="30">
    <location>
        <begin position="207"/>
        <end position="210"/>
    </location>
</feature>
<feature type="helix" evidence="30">
    <location>
        <begin position="211"/>
        <end position="215"/>
    </location>
</feature>
<feature type="helix" evidence="30">
    <location>
        <begin position="220"/>
        <end position="222"/>
    </location>
</feature>
<feature type="helix" evidence="30">
    <location>
        <begin position="223"/>
        <end position="231"/>
    </location>
</feature>
<feature type="strand" evidence="30">
    <location>
        <begin position="235"/>
        <end position="239"/>
    </location>
</feature>
<feature type="helix" evidence="30">
    <location>
        <begin position="243"/>
        <end position="245"/>
    </location>
</feature>
<feature type="strand" evidence="30">
    <location>
        <begin position="251"/>
        <end position="257"/>
    </location>
</feature>
<feature type="helix" evidence="30">
    <location>
        <begin position="263"/>
        <end position="269"/>
    </location>
</feature>
<feature type="strand" evidence="30">
    <location>
        <begin position="271"/>
        <end position="279"/>
    </location>
</feature>
<feature type="strand" evidence="30">
    <location>
        <begin position="283"/>
        <end position="296"/>
    </location>
</feature>
<feature type="turn" evidence="31">
    <location>
        <begin position="299"/>
        <end position="302"/>
    </location>
</feature>
<feature type="strand" evidence="30">
    <location>
        <begin position="305"/>
        <end position="308"/>
    </location>
</feature>
<feature type="strand" evidence="30">
    <location>
        <begin position="320"/>
        <end position="331"/>
    </location>
</feature>
<feature type="strand" evidence="30">
    <location>
        <begin position="336"/>
        <end position="345"/>
    </location>
</feature>
<feature type="strand" evidence="33">
    <location>
        <begin position="348"/>
        <end position="350"/>
    </location>
</feature>
<feature type="strand" evidence="30">
    <location>
        <begin position="352"/>
        <end position="361"/>
    </location>
</feature>
<feature type="strand" evidence="30">
    <location>
        <begin position="367"/>
        <end position="373"/>
    </location>
</feature>
<name>ANM6_HUMAN</name>
<proteinExistence type="evidence at protein level"/>